<organism>
    <name type="scientific">Maridesulfovibrio salexigens (strain ATCC 14822 / DSM 2638 / NCIMB 8403 / VKM B-1763)</name>
    <name type="common">Desulfovibrio salexigens</name>
    <dbReference type="NCBI Taxonomy" id="526222"/>
    <lineage>
        <taxon>Bacteria</taxon>
        <taxon>Pseudomonadati</taxon>
        <taxon>Thermodesulfobacteriota</taxon>
        <taxon>Desulfovibrionia</taxon>
        <taxon>Desulfovibrionales</taxon>
        <taxon>Desulfovibrionaceae</taxon>
        <taxon>Maridesulfovibrio</taxon>
    </lineage>
</organism>
<reference key="1">
    <citation type="submission" date="2009-06" db="EMBL/GenBank/DDBJ databases">
        <title>Complete sequence of Desulfovibrio salexigens DSM 2638.</title>
        <authorList>
            <consortium name="US DOE Joint Genome Institute"/>
            <person name="Lucas S."/>
            <person name="Copeland A."/>
            <person name="Lapidus A."/>
            <person name="Glavina del Rio T."/>
            <person name="Tice H."/>
            <person name="Bruce D."/>
            <person name="Goodwin L."/>
            <person name="Pitluck S."/>
            <person name="Munk A.C."/>
            <person name="Brettin T."/>
            <person name="Detter J.C."/>
            <person name="Han C."/>
            <person name="Tapia R."/>
            <person name="Larimer F."/>
            <person name="Land M."/>
            <person name="Hauser L."/>
            <person name="Kyrpides N."/>
            <person name="Anderson I."/>
            <person name="Wall J.D."/>
            <person name="Arkin A.P."/>
            <person name="Dehal P."/>
            <person name="Chivian D."/>
            <person name="Giles B."/>
            <person name="Hazen T.C."/>
        </authorList>
    </citation>
    <scope>NUCLEOTIDE SEQUENCE [LARGE SCALE GENOMIC DNA]</scope>
    <source>
        <strain>ATCC 14822 / DSM 2638 / NCIMB 8403 / VKM B-1763</strain>
    </source>
</reference>
<evidence type="ECO:0000255" key="1">
    <source>
        <dbReference type="HAMAP-Rule" id="MF_00374"/>
    </source>
</evidence>
<evidence type="ECO:0000305" key="2"/>
<dbReference type="EMBL" id="CP001649">
    <property type="protein sequence ID" value="ACS79256.1"/>
    <property type="molecule type" value="Genomic_DNA"/>
</dbReference>
<dbReference type="RefSeq" id="WP_015851075.1">
    <property type="nucleotide sequence ID" value="NC_012881.1"/>
</dbReference>
<dbReference type="SMR" id="C6C193"/>
<dbReference type="STRING" id="526222.Desal_1193"/>
<dbReference type="KEGG" id="dsa:Desal_1193"/>
<dbReference type="eggNOG" id="COG0255">
    <property type="taxonomic scope" value="Bacteria"/>
</dbReference>
<dbReference type="HOGENOM" id="CLU_158491_5_2_7"/>
<dbReference type="OrthoDB" id="9815192at2"/>
<dbReference type="Proteomes" id="UP000002601">
    <property type="component" value="Chromosome"/>
</dbReference>
<dbReference type="GO" id="GO:0022625">
    <property type="term" value="C:cytosolic large ribosomal subunit"/>
    <property type="evidence" value="ECO:0007669"/>
    <property type="project" value="TreeGrafter"/>
</dbReference>
<dbReference type="GO" id="GO:0003735">
    <property type="term" value="F:structural constituent of ribosome"/>
    <property type="evidence" value="ECO:0007669"/>
    <property type="project" value="InterPro"/>
</dbReference>
<dbReference type="GO" id="GO:0006412">
    <property type="term" value="P:translation"/>
    <property type="evidence" value="ECO:0007669"/>
    <property type="project" value="UniProtKB-UniRule"/>
</dbReference>
<dbReference type="CDD" id="cd00427">
    <property type="entry name" value="Ribosomal_L29_HIP"/>
    <property type="match status" value="1"/>
</dbReference>
<dbReference type="FunFam" id="1.10.287.310:FF:000001">
    <property type="entry name" value="50S ribosomal protein L29"/>
    <property type="match status" value="1"/>
</dbReference>
<dbReference type="Gene3D" id="1.10.287.310">
    <property type="match status" value="1"/>
</dbReference>
<dbReference type="HAMAP" id="MF_00374">
    <property type="entry name" value="Ribosomal_uL29"/>
    <property type="match status" value="1"/>
</dbReference>
<dbReference type="InterPro" id="IPR050063">
    <property type="entry name" value="Ribosomal_protein_uL29"/>
</dbReference>
<dbReference type="InterPro" id="IPR001854">
    <property type="entry name" value="Ribosomal_uL29"/>
</dbReference>
<dbReference type="InterPro" id="IPR018254">
    <property type="entry name" value="Ribosomal_uL29_CS"/>
</dbReference>
<dbReference type="InterPro" id="IPR036049">
    <property type="entry name" value="Ribosomal_uL29_sf"/>
</dbReference>
<dbReference type="NCBIfam" id="TIGR00012">
    <property type="entry name" value="L29"/>
    <property type="match status" value="1"/>
</dbReference>
<dbReference type="PANTHER" id="PTHR10916">
    <property type="entry name" value="60S RIBOSOMAL PROTEIN L35/50S RIBOSOMAL PROTEIN L29"/>
    <property type="match status" value="1"/>
</dbReference>
<dbReference type="PANTHER" id="PTHR10916:SF0">
    <property type="entry name" value="LARGE RIBOSOMAL SUBUNIT PROTEIN UL29C"/>
    <property type="match status" value="1"/>
</dbReference>
<dbReference type="Pfam" id="PF00831">
    <property type="entry name" value="Ribosomal_L29"/>
    <property type="match status" value="1"/>
</dbReference>
<dbReference type="SUPFAM" id="SSF46561">
    <property type="entry name" value="Ribosomal protein L29 (L29p)"/>
    <property type="match status" value="1"/>
</dbReference>
<dbReference type="PROSITE" id="PS00579">
    <property type="entry name" value="RIBOSOMAL_L29"/>
    <property type="match status" value="1"/>
</dbReference>
<keyword id="KW-1185">Reference proteome</keyword>
<keyword id="KW-0687">Ribonucleoprotein</keyword>
<keyword id="KW-0689">Ribosomal protein</keyword>
<name>RL29_MARSD</name>
<comment type="similarity">
    <text evidence="1">Belongs to the universal ribosomal protein uL29 family.</text>
</comment>
<sequence>MKAKELRELDNAALNEKLAEARQELFNLRFQHATAQLENTQRLSDVKKDIAKILTVQREKELGA</sequence>
<gene>
    <name evidence="1" type="primary">rpmC</name>
    <name type="ordered locus">Desal_1193</name>
</gene>
<proteinExistence type="inferred from homology"/>
<accession>C6C193</accession>
<feature type="chain" id="PRO_1000205619" description="Large ribosomal subunit protein uL29">
    <location>
        <begin position="1"/>
        <end position="64"/>
    </location>
</feature>
<protein>
    <recommendedName>
        <fullName evidence="1">Large ribosomal subunit protein uL29</fullName>
    </recommendedName>
    <alternativeName>
        <fullName evidence="2">50S ribosomal protein L29</fullName>
    </alternativeName>
</protein>